<sequence length="355" mass="40290">MSQKYLFIDRDGTLISEPPSDFQVDRFDKLAFEPGVIPQLLKLQKAGYKLVMITNQDGLGTQSFPQADFDGPHNLMMQIFTSQGVQFDEVLICPHLPADECDCRKPKVKLVERYLAEQAMDRANSYVIGDRATDIQLAENMGINGLRYDRETLNWPMIGEQLTRRDRYAHVVRNTKETQIDVQVWLDREGGSKINTGVGFFDHMLDQIATHGGFRMEINVKGDLYIDDHHTVEDTGLALGEALKIALGDKRGICRFGFVLPMDECLARCALDISGRPHLEYKAEFTYQRVGDLSTEMIEHFFRSLSYTMGVTLHLKTKGKNDHHRVESLFKAFGRTLRQAIRVEGDTLPSSKGVL</sequence>
<protein>
    <recommendedName>
        <fullName evidence="2">Histidine biosynthesis bifunctional protein HisB</fullName>
    </recommendedName>
    <domain>
        <recommendedName>
            <fullName evidence="2">Histidinol-phosphatase</fullName>
            <ecNumber evidence="2 3">3.1.3.15</ecNumber>
        </recommendedName>
        <alternativeName>
            <fullName evidence="4">Histidinol-phosphate phosphatase</fullName>
        </alternativeName>
    </domain>
    <domain>
        <recommendedName>
            <fullName evidence="2">Imidazoleglycerol-phosphate dehydratase</fullName>
            <shortName evidence="2">IGPD</shortName>
            <ecNumber evidence="2">4.2.1.19</ecNumber>
        </recommendedName>
    </domain>
</protein>
<feature type="chain" id="PRO_0000158208" description="Histidine biosynthesis bifunctional protein HisB">
    <location>
        <begin position="1"/>
        <end position="355"/>
    </location>
</feature>
<feature type="region of interest" description="Histidinol-phosphatase" evidence="2 3">
    <location>
        <begin position="1"/>
        <end position="166"/>
    </location>
</feature>
<feature type="region of interest" description="Imidazoleglycerol-phosphate dehydratase" evidence="1 2">
    <location>
        <begin position="167"/>
        <end position="355"/>
    </location>
</feature>
<feature type="active site" description="Nucleophile" evidence="2 6">
    <location>
        <position position="9"/>
    </location>
</feature>
<feature type="active site" description="Proton donor" evidence="2 6">
    <location>
        <position position="11"/>
    </location>
</feature>
<feature type="binding site" evidence="2 3">
    <location>
        <position position="9"/>
    </location>
    <ligand>
        <name>Mg(2+)</name>
        <dbReference type="ChEBI" id="CHEBI:18420"/>
    </ligand>
</feature>
<feature type="binding site" evidence="2 3">
    <location>
        <position position="11"/>
    </location>
    <ligand>
        <name>Mg(2+)</name>
        <dbReference type="ChEBI" id="CHEBI:18420"/>
    </ligand>
</feature>
<feature type="binding site" evidence="2 3">
    <location>
        <position position="93"/>
    </location>
    <ligand>
        <name>Zn(2+)</name>
        <dbReference type="ChEBI" id="CHEBI:29105"/>
    </ligand>
</feature>
<feature type="binding site" evidence="2 3">
    <location>
        <position position="95"/>
    </location>
    <ligand>
        <name>Zn(2+)</name>
        <dbReference type="ChEBI" id="CHEBI:29105"/>
    </ligand>
</feature>
<feature type="binding site" evidence="2 3">
    <location>
        <position position="101"/>
    </location>
    <ligand>
        <name>Zn(2+)</name>
        <dbReference type="ChEBI" id="CHEBI:29105"/>
    </ligand>
</feature>
<feature type="binding site" evidence="2 3">
    <location>
        <position position="103"/>
    </location>
    <ligand>
        <name>Zn(2+)</name>
        <dbReference type="ChEBI" id="CHEBI:29105"/>
    </ligand>
</feature>
<feature type="binding site" evidence="2 3">
    <location>
        <position position="130"/>
    </location>
    <ligand>
        <name>Mg(2+)</name>
        <dbReference type="ChEBI" id="CHEBI:18420"/>
    </ligand>
</feature>
<feature type="mutagenesis site" description="Severe decrease in histidinol-phosphate phosphatase activity in presence of low magnesium concentration. At higher magnesium concentration (5mM), no effect on activity." evidence="3">
    <original>E</original>
    <variation>A</variation>
    <location>
        <position position="17"/>
    </location>
</feature>
<feature type="strand" evidence="7">
    <location>
        <begin position="4"/>
        <end position="8"/>
    </location>
</feature>
<feature type="turn" evidence="7">
    <location>
        <begin position="12"/>
        <end position="14"/>
    </location>
</feature>
<feature type="turn" evidence="8">
    <location>
        <begin position="19"/>
        <end position="21"/>
    </location>
</feature>
<feature type="helix" evidence="7">
    <location>
        <begin position="27"/>
        <end position="29"/>
    </location>
</feature>
<feature type="helix" evidence="7">
    <location>
        <begin position="36"/>
        <end position="45"/>
    </location>
</feature>
<feature type="strand" evidence="7">
    <location>
        <begin position="48"/>
        <end position="55"/>
    </location>
</feature>
<feature type="turn" evidence="7">
    <location>
        <begin position="57"/>
        <end position="60"/>
    </location>
</feature>
<feature type="helix" evidence="7">
    <location>
        <begin position="66"/>
        <end position="82"/>
    </location>
</feature>
<feature type="strand" evidence="7">
    <location>
        <begin position="87"/>
        <end position="93"/>
    </location>
</feature>
<feature type="helix" evidence="7">
    <location>
        <begin position="97"/>
        <end position="99"/>
    </location>
</feature>
<feature type="strand" evidence="7">
    <location>
        <begin position="102"/>
        <end position="104"/>
    </location>
</feature>
<feature type="helix" evidence="7">
    <location>
        <begin position="109"/>
        <end position="114"/>
    </location>
</feature>
<feature type="helix" evidence="7">
    <location>
        <begin position="122"/>
        <end position="124"/>
    </location>
</feature>
<feature type="strand" evidence="7">
    <location>
        <begin position="126"/>
        <end position="131"/>
    </location>
</feature>
<feature type="helix" evidence="7">
    <location>
        <begin position="132"/>
        <end position="141"/>
    </location>
</feature>
<feature type="strand" evidence="7">
    <location>
        <begin position="143"/>
        <end position="147"/>
    </location>
</feature>
<feature type="turn" evidence="7">
    <location>
        <begin position="150"/>
        <end position="152"/>
    </location>
</feature>
<feature type="helix" evidence="7">
    <location>
        <begin position="155"/>
        <end position="161"/>
    </location>
</feature>
<keyword id="KW-0002">3D-structure</keyword>
<keyword id="KW-0028">Amino-acid biosynthesis</keyword>
<keyword id="KW-0963">Cytoplasm</keyword>
<keyword id="KW-0368">Histidine biosynthesis</keyword>
<keyword id="KW-0378">Hydrolase</keyword>
<keyword id="KW-0456">Lyase</keyword>
<keyword id="KW-0460">Magnesium</keyword>
<keyword id="KW-0479">Metal-binding</keyword>
<keyword id="KW-0511">Multifunctional enzyme</keyword>
<keyword id="KW-1185">Reference proteome</keyword>
<keyword id="KW-0862">Zinc</keyword>
<dbReference type="EC" id="3.1.3.15" evidence="2 3"/>
<dbReference type="EC" id="4.2.1.19" evidence="2"/>
<dbReference type="EMBL" id="AB008676">
    <property type="protein sequence ID" value="BAA77743.1"/>
    <property type="molecule type" value="Genomic_DNA"/>
</dbReference>
<dbReference type="EMBL" id="AE005174">
    <property type="protein sequence ID" value="AAG57081.1"/>
    <property type="status" value="ALT_INIT"/>
    <property type="molecule type" value="Genomic_DNA"/>
</dbReference>
<dbReference type="EMBL" id="BA000007">
    <property type="protein sequence ID" value="BAB36246.2"/>
    <property type="molecule type" value="Genomic_DNA"/>
</dbReference>
<dbReference type="PIR" id="E85827">
    <property type="entry name" value="E85827"/>
</dbReference>
<dbReference type="PIR" id="G90981">
    <property type="entry name" value="G90981"/>
</dbReference>
<dbReference type="RefSeq" id="NP_310850.2">
    <property type="nucleotide sequence ID" value="NC_002695.1"/>
</dbReference>
<dbReference type="RefSeq" id="WP_000080139.1">
    <property type="nucleotide sequence ID" value="NZ_VOAI01000013.1"/>
</dbReference>
<dbReference type="PDB" id="2FPR">
    <property type="method" value="X-ray"/>
    <property type="resolution" value="1.70 A"/>
    <property type="chains" value="A/B=2-165"/>
</dbReference>
<dbReference type="PDB" id="2FPS">
    <property type="method" value="X-ray"/>
    <property type="resolution" value="2.20 A"/>
    <property type="chains" value="A/B=2-165"/>
</dbReference>
<dbReference type="PDB" id="2FPU">
    <property type="method" value="X-ray"/>
    <property type="resolution" value="1.80 A"/>
    <property type="chains" value="A/B=2-165"/>
</dbReference>
<dbReference type="PDB" id="2FPW">
    <property type="method" value="X-ray"/>
    <property type="resolution" value="1.75 A"/>
    <property type="chains" value="A/B=2-165"/>
</dbReference>
<dbReference type="PDB" id="2FPX">
    <property type="method" value="X-ray"/>
    <property type="resolution" value="1.80 A"/>
    <property type="chains" value="A/B=2-165"/>
</dbReference>
<dbReference type="PDBsum" id="2FPR"/>
<dbReference type="PDBsum" id="2FPS"/>
<dbReference type="PDBsum" id="2FPU"/>
<dbReference type="PDBsum" id="2FPW"/>
<dbReference type="PDBsum" id="2FPX"/>
<dbReference type="SMR" id="Q9S5G5"/>
<dbReference type="STRING" id="155864.Z3184"/>
<dbReference type="GeneID" id="914091"/>
<dbReference type="KEGG" id="ece:Z3184"/>
<dbReference type="KEGG" id="ecs:ECs_2823"/>
<dbReference type="PATRIC" id="fig|386585.9.peg.2958"/>
<dbReference type="eggNOG" id="COG0131">
    <property type="taxonomic scope" value="Bacteria"/>
</dbReference>
<dbReference type="eggNOG" id="COG0241">
    <property type="taxonomic scope" value="Bacteria"/>
</dbReference>
<dbReference type="HOGENOM" id="CLU_044308_0_0_6"/>
<dbReference type="OMA" id="PEDTFWP"/>
<dbReference type="SABIO-RK" id="Q9S5G5"/>
<dbReference type="UniPathway" id="UPA00031">
    <property type="reaction ID" value="UER00011"/>
</dbReference>
<dbReference type="UniPathway" id="UPA00031">
    <property type="reaction ID" value="UER00013"/>
</dbReference>
<dbReference type="EvolutionaryTrace" id="Q9S5G5"/>
<dbReference type="Proteomes" id="UP000000558">
    <property type="component" value="Chromosome"/>
</dbReference>
<dbReference type="Proteomes" id="UP000002519">
    <property type="component" value="Chromosome"/>
</dbReference>
<dbReference type="GO" id="GO:0005737">
    <property type="term" value="C:cytoplasm"/>
    <property type="evidence" value="ECO:0007669"/>
    <property type="project" value="UniProtKB-SubCell"/>
</dbReference>
<dbReference type="GO" id="GO:0004401">
    <property type="term" value="F:histidinol-phosphatase activity"/>
    <property type="evidence" value="ECO:0007669"/>
    <property type="project" value="UniProtKB-UniRule"/>
</dbReference>
<dbReference type="GO" id="GO:0004424">
    <property type="term" value="F:imidazoleglycerol-phosphate dehydratase activity"/>
    <property type="evidence" value="ECO:0007669"/>
    <property type="project" value="UniProtKB-UniRule"/>
</dbReference>
<dbReference type="GO" id="GO:0046872">
    <property type="term" value="F:metal ion binding"/>
    <property type="evidence" value="ECO:0007669"/>
    <property type="project" value="UniProtKB-KW"/>
</dbReference>
<dbReference type="GO" id="GO:0000105">
    <property type="term" value="P:L-histidine biosynthetic process"/>
    <property type="evidence" value="ECO:0007669"/>
    <property type="project" value="UniProtKB-UniRule"/>
</dbReference>
<dbReference type="CDD" id="cd07503">
    <property type="entry name" value="HAD_HisB-N"/>
    <property type="match status" value="1"/>
</dbReference>
<dbReference type="CDD" id="cd07914">
    <property type="entry name" value="IGPD"/>
    <property type="match status" value="1"/>
</dbReference>
<dbReference type="FunFam" id="3.40.50.1000:FF:000061">
    <property type="entry name" value="Histidine biosynthesis bifunctional protein HisB"/>
    <property type="match status" value="1"/>
</dbReference>
<dbReference type="FunFam" id="3.30.230.40:FF:000001">
    <property type="entry name" value="Imidazoleglycerol-phosphate dehydratase HisB"/>
    <property type="match status" value="1"/>
</dbReference>
<dbReference type="FunFam" id="3.30.230.40:FF:000003">
    <property type="entry name" value="Imidazoleglycerol-phosphate dehydratase HisB"/>
    <property type="match status" value="1"/>
</dbReference>
<dbReference type="Gene3D" id="3.40.50.1000">
    <property type="entry name" value="HAD superfamily/HAD-like"/>
    <property type="match status" value="1"/>
</dbReference>
<dbReference type="Gene3D" id="3.30.230.40">
    <property type="entry name" value="Imidazole glycerol phosphate dehydratase, domain 1"/>
    <property type="match status" value="2"/>
</dbReference>
<dbReference type="HAMAP" id="MF_01022">
    <property type="entry name" value="Bifunc_HisB"/>
    <property type="match status" value="1"/>
</dbReference>
<dbReference type="HAMAP" id="MF_00076">
    <property type="entry name" value="HisB"/>
    <property type="match status" value="1"/>
</dbReference>
<dbReference type="InterPro" id="IPR036412">
    <property type="entry name" value="HAD-like_sf"/>
</dbReference>
<dbReference type="InterPro" id="IPR006549">
    <property type="entry name" value="HAD-SF_hydro_IIIA"/>
</dbReference>
<dbReference type="InterPro" id="IPR023214">
    <property type="entry name" value="HAD_sf"/>
</dbReference>
<dbReference type="InterPro" id="IPR020566">
    <property type="entry name" value="His_synth_bifunc_HisB"/>
</dbReference>
<dbReference type="InterPro" id="IPR005954">
    <property type="entry name" value="HisB_N"/>
</dbReference>
<dbReference type="InterPro" id="IPR006543">
    <property type="entry name" value="Histidinol-phos"/>
</dbReference>
<dbReference type="InterPro" id="IPR038494">
    <property type="entry name" value="IGPD_sf"/>
</dbReference>
<dbReference type="InterPro" id="IPR000807">
    <property type="entry name" value="ImidazoleglycerolP_deHydtase"/>
</dbReference>
<dbReference type="InterPro" id="IPR020565">
    <property type="entry name" value="ImidazoleglycerP_deHydtase_CS"/>
</dbReference>
<dbReference type="InterPro" id="IPR020568">
    <property type="entry name" value="Ribosomal_Su5_D2-typ_SF"/>
</dbReference>
<dbReference type="NCBIfam" id="TIGR01662">
    <property type="entry name" value="HAD-SF-IIIA"/>
    <property type="match status" value="1"/>
</dbReference>
<dbReference type="NCBIfam" id="TIGR01261">
    <property type="entry name" value="hisB_Nterm"/>
    <property type="match status" value="1"/>
</dbReference>
<dbReference type="NCBIfam" id="TIGR01656">
    <property type="entry name" value="Histidinol-ppas"/>
    <property type="match status" value="1"/>
</dbReference>
<dbReference type="NCBIfam" id="NF002111">
    <property type="entry name" value="PRK00951.2-1"/>
    <property type="match status" value="1"/>
</dbReference>
<dbReference type="NCBIfam" id="NF002114">
    <property type="entry name" value="PRK00951.2-4"/>
    <property type="match status" value="1"/>
</dbReference>
<dbReference type="NCBIfam" id="NF003937">
    <property type="entry name" value="PRK05446.1"/>
    <property type="match status" value="1"/>
</dbReference>
<dbReference type="PANTHER" id="PTHR23133:SF2">
    <property type="entry name" value="IMIDAZOLEGLYCEROL-PHOSPHATE DEHYDRATASE"/>
    <property type="match status" value="1"/>
</dbReference>
<dbReference type="PANTHER" id="PTHR23133">
    <property type="entry name" value="IMIDAZOLEGLYCEROL-PHOSPHATE DEHYDRATASE HIS7"/>
    <property type="match status" value="1"/>
</dbReference>
<dbReference type="Pfam" id="PF13242">
    <property type="entry name" value="Hydrolase_like"/>
    <property type="match status" value="1"/>
</dbReference>
<dbReference type="Pfam" id="PF00475">
    <property type="entry name" value="IGPD"/>
    <property type="match status" value="1"/>
</dbReference>
<dbReference type="SFLD" id="SFLDG01134">
    <property type="entry name" value="C1.5.5:_Heptose_Bisphosphate_P"/>
    <property type="match status" value="1"/>
</dbReference>
<dbReference type="SFLD" id="SFLDF00028">
    <property type="entry name" value="histidinol-phosphatase"/>
    <property type="match status" value="1"/>
</dbReference>
<dbReference type="SUPFAM" id="SSF56784">
    <property type="entry name" value="HAD-like"/>
    <property type="match status" value="1"/>
</dbReference>
<dbReference type="SUPFAM" id="SSF54211">
    <property type="entry name" value="Ribosomal protein S5 domain 2-like"/>
    <property type="match status" value="2"/>
</dbReference>
<dbReference type="PROSITE" id="PS00954">
    <property type="entry name" value="IGP_DEHYDRATASE_1"/>
    <property type="match status" value="1"/>
</dbReference>
<dbReference type="PROSITE" id="PS00955">
    <property type="entry name" value="IGP_DEHYDRATASE_2"/>
    <property type="match status" value="1"/>
</dbReference>
<evidence type="ECO:0000250" key="1">
    <source>
        <dbReference type="UniProtKB" id="P06987"/>
    </source>
</evidence>
<evidence type="ECO:0000255" key="2">
    <source>
        <dbReference type="HAMAP-Rule" id="MF_01022"/>
    </source>
</evidence>
<evidence type="ECO:0000269" key="3">
    <source>
    </source>
</evidence>
<evidence type="ECO:0000303" key="4">
    <source>
    </source>
</evidence>
<evidence type="ECO:0000305" key="5"/>
<evidence type="ECO:0000305" key="6">
    <source>
    </source>
</evidence>
<evidence type="ECO:0007829" key="7">
    <source>
        <dbReference type="PDB" id="2FPR"/>
    </source>
</evidence>
<evidence type="ECO:0007829" key="8">
    <source>
        <dbReference type="PDB" id="2FPU"/>
    </source>
</evidence>
<organism>
    <name type="scientific">Escherichia coli O157:H7</name>
    <dbReference type="NCBI Taxonomy" id="83334"/>
    <lineage>
        <taxon>Bacteria</taxon>
        <taxon>Pseudomonadati</taxon>
        <taxon>Pseudomonadota</taxon>
        <taxon>Gammaproteobacteria</taxon>
        <taxon>Enterobacterales</taxon>
        <taxon>Enterobacteriaceae</taxon>
        <taxon>Escherichia</taxon>
    </lineage>
</organism>
<gene>
    <name evidence="2" type="primary">hisB</name>
    <name type="ordered locus">Z3184</name>
    <name type="ordered locus">ECs2823</name>
</gene>
<proteinExistence type="evidence at protein level"/>
<reference key="1">
    <citation type="journal article" date="1999" name="Microb. Pathog.">
        <title>Analysis of the genes responsible for the O-antigen synthesis in enterohaemorrhagic Escherichia coli O157.</title>
        <authorList>
            <person name="Shimizu T."/>
            <person name="Yamasaki S."/>
            <person name="Tsukamoto T."/>
            <person name="Takeda Y."/>
        </authorList>
    </citation>
    <scope>NUCLEOTIDE SEQUENCE [GENOMIC DNA]</scope>
    <source>
        <strain>O157:H- / 184 / EHEC</strain>
    </source>
</reference>
<reference key="2">
    <citation type="journal article" date="2001" name="Nature">
        <title>Genome sequence of enterohaemorrhagic Escherichia coli O157:H7.</title>
        <authorList>
            <person name="Perna N.T."/>
            <person name="Plunkett G. III"/>
            <person name="Burland V."/>
            <person name="Mau B."/>
            <person name="Glasner J.D."/>
            <person name="Rose D.J."/>
            <person name="Mayhew G.F."/>
            <person name="Evans P.S."/>
            <person name="Gregor J."/>
            <person name="Kirkpatrick H.A."/>
            <person name="Posfai G."/>
            <person name="Hackett J."/>
            <person name="Klink S."/>
            <person name="Boutin A."/>
            <person name="Shao Y."/>
            <person name="Miller L."/>
            <person name="Grotbeck E.J."/>
            <person name="Davis N.W."/>
            <person name="Lim A."/>
            <person name="Dimalanta E.T."/>
            <person name="Potamousis K."/>
            <person name="Apodaca J."/>
            <person name="Anantharaman T.S."/>
            <person name="Lin J."/>
            <person name="Yen G."/>
            <person name="Schwartz D.C."/>
            <person name="Welch R.A."/>
            <person name="Blattner F.R."/>
        </authorList>
    </citation>
    <scope>NUCLEOTIDE SEQUENCE [LARGE SCALE GENOMIC DNA]</scope>
    <source>
        <strain>O157:H7 / EDL933 / ATCC 700927 / EHEC</strain>
    </source>
</reference>
<reference key="3">
    <citation type="journal article" date="2001" name="DNA Res.">
        <title>Complete genome sequence of enterohemorrhagic Escherichia coli O157:H7 and genomic comparison with a laboratory strain K-12.</title>
        <authorList>
            <person name="Hayashi T."/>
            <person name="Makino K."/>
            <person name="Ohnishi M."/>
            <person name="Kurokawa K."/>
            <person name="Ishii K."/>
            <person name="Yokoyama K."/>
            <person name="Han C.-G."/>
            <person name="Ohtsubo E."/>
            <person name="Nakayama K."/>
            <person name="Murata T."/>
            <person name="Tanaka M."/>
            <person name="Tobe T."/>
            <person name="Iida T."/>
            <person name="Takami H."/>
            <person name="Honda T."/>
            <person name="Sasakawa C."/>
            <person name="Ogasawara N."/>
            <person name="Yasunaga T."/>
            <person name="Kuhara S."/>
            <person name="Shiba T."/>
            <person name="Hattori M."/>
            <person name="Shinagawa H."/>
        </authorList>
    </citation>
    <scope>NUCLEOTIDE SEQUENCE [LARGE SCALE GENOMIC DNA]</scope>
    <source>
        <strain>O157:H7 / Sakai / RIMD 0509952 / EHEC</strain>
    </source>
</reference>
<reference key="4">
    <citation type="journal article" date="2006" name="J. Biol. Chem.">
        <title>Structural snapshots of Escherichia coli histidinol phosphate phosphatase along the reaction pathway.</title>
        <authorList>
            <person name="Rangarajan E.S."/>
            <person name="Proteau A."/>
            <person name="Wagner J."/>
            <person name="Hung M.N."/>
            <person name="Matte A."/>
            <person name="Cygler M."/>
        </authorList>
    </citation>
    <scope>X-RAY CRYSTALLOGRAPHY (1.70 ANGSTROMS) OF 2-165 IN COMPLEX WITH CALCIUM; MAGNESIUM AND ZINC</scope>
    <scope>CATALYTIC ACTIVITY</scope>
    <scope>COFACTOR</scope>
    <scope>BIOPHYSICOCHEMICAL PROPERTIES</scope>
    <scope>ACTIVITY REGULATION</scope>
    <scope>REGION</scope>
    <scope>MUTAGENESIS OF GLU-17</scope>
</reference>
<accession>Q9S5G5</accession>
<accession>Q8X8T1</accession>
<comment type="catalytic activity">
    <reaction evidence="2">
        <text>D-erythro-1-(imidazol-4-yl)glycerol 3-phosphate = 3-(imidazol-4-yl)-2-oxopropyl phosphate + H2O</text>
        <dbReference type="Rhea" id="RHEA:11040"/>
        <dbReference type="ChEBI" id="CHEBI:15377"/>
        <dbReference type="ChEBI" id="CHEBI:57766"/>
        <dbReference type="ChEBI" id="CHEBI:58278"/>
        <dbReference type="EC" id="4.2.1.19"/>
    </reaction>
</comment>
<comment type="catalytic activity">
    <reaction evidence="2 3">
        <text>L-histidinol phosphate + H2O = L-histidinol + phosphate</text>
        <dbReference type="Rhea" id="RHEA:14465"/>
        <dbReference type="ChEBI" id="CHEBI:15377"/>
        <dbReference type="ChEBI" id="CHEBI:43474"/>
        <dbReference type="ChEBI" id="CHEBI:57699"/>
        <dbReference type="ChEBI" id="CHEBI:57980"/>
        <dbReference type="EC" id="3.1.3.15"/>
    </reaction>
</comment>
<comment type="cofactor">
    <cofactor evidence="2 3">
        <name>Mg(2+)</name>
        <dbReference type="ChEBI" id="CHEBI:18420"/>
    </cofactor>
    <text evidence="3">Binds 2 Mg(2+) ions. Can also use Co(2+) and Mn(2+)ions.</text>
</comment>
<comment type="cofactor">
    <cofactor evidence="2 3">
        <name>Zn(2+)</name>
        <dbReference type="ChEBI" id="CHEBI:29105"/>
    </cofactor>
</comment>
<comment type="activity regulation">
    <text evidence="3">Inhibited by Ca(2+).</text>
</comment>
<comment type="biophysicochemical properties">
    <kinetics>
        <KM evidence="3">54 uM for histidinol phosphate (in the presence of Mg(2+))</KM>
        <KM evidence="3">54 uM for histidinol phosphate (in the presence of Co(2+))</KM>
        <KM evidence="3">41 uM for histidinol phosphate (in the presence of Zn(2+))</KM>
        <KM evidence="3">52 uM for histidinol phosphate (in the presence of Mn(2+))</KM>
    </kinetics>
</comment>
<comment type="pathway">
    <text evidence="2">Amino-acid biosynthesis; L-histidine biosynthesis; L-histidine from 5-phospho-alpha-D-ribose 1-diphosphate: step 6/9.</text>
</comment>
<comment type="pathway">
    <text evidence="2">Amino-acid biosynthesis; L-histidine biosynthesis; L-histidine from 5-phospho-alpha-D-ribose 1-diphosphate: step 8/9.</text>
</comment>
<comment type="subcellular location">
    <subcellularLocation>
        <location evidence="2">Cytoplasm</location>
    </subcellularLocation>
</comment>
<comment type="similarity">
    <text evidence="2">In the N-terminal section; belongs to the histidinol-phosphatase family.</text>
</comment>
<comment type="similarity">
    <text evidence="2">In the C-terminal section; belongs to the imidazoleglycerol-phosphate dehydratase family.</text>
</comment>
<comment type="sequence caution" evidence="5">
    <conflict type="erroneous initiation">
        <sequence resource="EMBL-CDS" id="AAG57081"/>
    </conflict>
    <text>Extended N-terminus.</text>
</comment>
<name>HIS7_ECO57</name>